<keyword id="KW-0997">Cell inner membrane</keyword>
<keyword id="KW-1003">Cell membrane</keyword>
<keyword id="KW-0444">Lipid biosynthesis</keyword>
<keyword id="KW-0443">Lipid metabolism</keyword>
<keyword id="KW-0472">Membrane</keyword>
<keyword id="KW-0594">Phospholipid biosynthesis</keyword>
<keyword id="KW-1208">Phospholipid metabolism</keyword>
<keyword id="KW-0808">Transferase</keyword>
<keyword id="KW-0812">Transmembrane</keyword>
<keyword id="KW-1133">Transmembrane helix</keyword>
<comment type="function">
    <text evidence="1">Catalyzes the transfer of an acyl group from acyl-phosphate (acyl-PO(4)) to glycerol-3-phosphate (G3P) to form lysophosphatidic acid (LPA). This enzyme utilizes acyl-phosphate as fatty acyl donor, but not acyl-CoA or acyl-ACP.</text>
</comment>
<comment type="catalytic activity">
    <reaction evidence="1">
        <text>an acyl phosphate + sn-glycerol 3-phosphate = a 1-acyl-sn-glycero-3-phosphate + phosphate</text>
        <dbReference type="Rhea" id="RHEA:34075"/>
        <dbReference type="ChEBI" id="CHEBI:43474"/>
        <dbReference type="ChEBI" id="CHEBI:57597"/>
        <dbReference type="ChEBI" id="CHEBI:57970"/>
        <dbReference type="ChEBI" id="CHEBI:59918"/>
        <dbReference type="EC" id="2.3.1.275"/>
    </reaction>
</comment>
<comment type="pathway">
    <text evidence="1">Lipid metabolism; phospholipid metabolism.</text>
</comment>
<comment type="subunit">
    <text evidence="1">Probably interacts with PlsX.</text>
</comment>
<comment type="subcellular location">
    <subcellularLocation>
        <location evidence="1">Cell inner membrane</location>
        <topology evidence="1">Multi-pass membrane protein</topology>
    </subcellularLocation>
</comment>
<comment type="similarity">
    <text evidence="1">Belongs to the PlsY family.</text>
</comment>
<comment type="sequence caution" evidence="2">
    <conflict type="erroneous initiation">
        <sequence resource="EMBL-CDS" id="ABB09482"/>
    </conflict>
</comment>
<feature type="chain" id="PRO_0000250290" description="Glycerol-3-phosphate acyltransferase">
    <location>
        <begin position="1"/>
        <end position="212"/>
    </location>
</feature>
<feature type="transmembrane region" description="Helical" evidence="1">
    <location>
        <begin position="3"/>
        <end position="23"/>
    </location>
</feature>
<feature type="transmembrane region" description="Helical" evidence="1">
    <location>
        <begin position="78"/>
        <end position="98"/>
    </location>
</feature>
<feature type="transmembrane region" description="Helical" evidence="1">
    <location>
        <begin position="115"/>
        <end position="135"/>
    </location>
</feature>
<feature type="transmembrane region" description="Helical" evidence="1">
    <location>
        <begin position="155"/>
        <end position="177"/>
    </location>
</feature>
<protein>
    <recommendedName>
        <fullName evidence="1">Glycerol-3-phosphate acyltransferase</fullName>
    </recommendedName>
    <alternativeName>
        <fullName evidence="1">Acyl-PO4 G3P acyltransferase</fullName>
    </alternativeName>
    <alternativeName>
        <fullName evidence="1">Acyl-phosphate--glycerol-3-phosphate acyltransferase</fullName>
    </alternativeName>
    <alternativeName>
        <fullName evidence="1">G3P acyltransferase</fullName>
        <shortName evidence="1">GPAT</shortName>
        <ecNumber evidence="1">2.3.1.275</ecNumber>
    </alternativeName>
    <alternativeName>
        <fullName evidence="1">Lysophosphatidic acid synthase</fullName>
        <shortName evidence="1">LPA synthase</shortName>
    </alternativeName>
</protein>
<evidence type="ECO:0000255" key="1">
    <source>
        <dbReference type="HAMAP-Rule" id="MF_01043"/>
    </source>
</evidence>
<evidence type="ECO:0000305" key="2"/>
<proteinExistence type="inferred from homology"/>
<reference key="1">
    <citation type="submission" date="2005-10" db="EMBL/GenBank/DDBJ databases">
        <title>Complete sequence of chromosome 1 of Burkholderia sp. 383.</title>
        <authorList>
            <consortium name="US DOE Joint Genome Institute"/>
            <person name="Copeland A."/>
            <person name="Lucas S."/>
            <person name="Lapidus A."/>
            <person name="Barry K."/>
            <person name="Detter J.C."/>
            <person name="Glavina T."/>
            <person name="Hammon N."/>
            <person name="Israni S."/>
            <person name="Pitluck S."/>
            <person name="Chain P."/>
            <person name="Malfatti S."/>
            <person name="Shin M."/>
            <person name="Vergez L."/>
            <person name="Schmutz J."/>
            <person name="Larimer F."/>
            <person name="Land M."/>
            <person name="Kyrpides N."/>
            <person name="Lykidis A."/>
            <person name="Richardson P."/>
        </authorList>
    </citation>
    <scope>NUCLEOTIDE SEQUENCE [LARGE SCALE GENOMIC DNA]</scope>
    <source>
        <strain>ATCC 17760 / DSM 23089 / LMG 22485 / NCIMB 9086 / R18194 / 383</strain>
    </source>
</reference>
<dbReference type="EC" id="2.3.1.275" evidence="1"/>
<dbReference type="EMBL" id="CP000151">
    <property type="protein sequence ID" value="ABB09482.1"/>
    <property type="status" value="ALT_INIT"/>
    <property type="molecule type" value="Genomic_DNA"/>
</dbReference>
<dbReference type="RefSeq" id="WP_011352999.1">
    <property type="nucleotide sequence ID" value="NZ_CABVQB010000006.1"/>
</dbReference>
<dbReference type="SMR" id="Q39DI4"/>
<dbReference type="GeneID" id="45095771"/>
<dbReference type="KEGG" id="bur:Bcep18194_A5888"/>
<dbReference type="PATRIC" id="fig|482957.22.peg.2879"/>
<dbReference type="HOGENOM" id="CLU_081254_0_0_4"/>
<dbReference type="UniPathway" id="UPA00085"/>
<dbReference type="Proteomes" id="UP000002705">
    <property type="component" value="Chromosome 1"/>
</dbReference>
<dbReference type="GO" id="GO:0005886">
    <property type="term" value="C:plasma membrane"/>
    <property type="evidence" value="ECO:0007669"/>
    <property type="project" value="UniProtKB-SubCell"/>
</dbReference>
<dbReference type="GO" id="GO:0043772">
    <property type="term" value="F:acyl-phosphate glycerol-3-phosphate acyltransferase activity"/>
    <property type="evidence" value="ECO:0007669"/>
    <property type="project" value="UniProtKB-UniRule"/>
</dbReference>
<dbReference type="GO" id="GO:0008654">
    <property type="term" value="P:phospholipid biosynthetic process"/>
    <property type="evidence" value="ECO:0007669"/>
    <property type="project" value="UniProtKB-UniRule"/>
</dbReference>
<dbReference type="HAMAP" id="MF_01043">
    <property type="entry name" value="PlsY"/>
    <property type="match status" value="1"/>
</dbReference>
<dbReference type="InterPro" id="IPR003811">
    <property type="entry name" value="G3P_acylTferase_PlsY"/>
</dbReference>
<dbReference type="NCBIfam" id="TIGR00023">
    <property type="entry name" value="glycerol-3-phosphate 1-O-acyltransferase PlsY"/>
    <property type="match status" value="1"/>
</dbReference>
<dbReference type="PANTHER" id="PTHR30309:SF0">
    <property type="entry name" value="GLYCEROL-3-PHOSPHATE ACYLTRANSFERASE-RELATED"/>
    <property type="match status" value="1"/>
</dbReference>
<dbReference type="PANTHER" id="PTHR30309">
    <property type="entry name" value="INNER MEMBRANE PROTEIN YGIH"/>
    <property type="match status" value="1"/>
</dbReference>
<dbReference type="Pfam" id="PF02660">
    <property type="entry name" value="G3P_acyltransf"/>
    <property type="match status" value="1"/>
</dbReference>
<dbReference type="SMART" id="SM01207">
    <property type="entry name" value="G3P_acyltransf"/>
    <property type="match status" value="1"/>
</dbReference>
<name>PLSY_BURL3</name>
<sequence length="212" mass="22111">MQILLAALVAYLIGSVSFAVVVSGAMGLADPRSYGSKNPGATNVLRSGNKKAAILTLVGDAFKGWIAVWLARHLGLPDVAVAWVAIAVFLGHLYPVFFRFQGGKGVATAAGVLLAVHPVLGLATALTWLIVAFFFRYSSLAALVAAVFAPVFDVFLFGTGHNPVAWAVLAMSVLLVWRHRGNISKLLAGQESRIGDKKKAAADGGAQDGGKA</sequence>
<organism>
    <name type="scientific">Burkholderia lata (strain ATCC 17760 / DSM 23089 / LMG 22485 / NCIMB 9086 / R18194 / 383)</name>
    <dbReference type="NCBI Taxonomy" id="482957"/>
    <lineage>
        <taxon>Bacteria</taxon>
        <taxon>Pseudomonadati</taxon>
        <taxon>Pseudomonadota</taxon>
        <taxon>Betaproteobacteria</taxon>
        <taxon>Burkholderiales</taxon>
        <taxon>Burkholderiaceae</taxon>
        <taxon>Burkholderia</taxon>
        <taxon>Burkholderia cepacia complex</taxon>
    </lineage>
</organism>
<gene>
    <name evidence="1" type="primary">plsY</name>
    <name type="ordered locus">Bcep18194_A5888</name>
</gene>
<accession>Q39DI4</accession>